<reference key="1">
    <citation type="submission" date="2005-08" db="EMBL/GenBank/DDBJ databases">
        <title>Complete sequence of Pelodictyon luteolum DSM 273.</title>
        <authorList>
            <consortium name="US DOE Joint Genome Institute"/>
            <person name="Copeland A."/>
            <person name="Lucas S."/>
            <person name="Lapidus A."/>
            <person name="Barry K."/>
            <person name="Detter J.C."/>
            <person name="Glavina T."/>
            <person name="Hammon N."/>
            <person name="Israni S."/>
            <person name="Pitluck S."/>
            <person name="Bryant D."/>
            <person name="Schmutz J."/>
            <person name="Larimer F."/>
            <person name="Land M."/>
            <person name="Kyrpides N."/>
            <person name="Ivanova N."/>
            <person name="Richardson P."/>
        </authorList>
    </citation>
    <scope>NUCLEOTIDE SEQUENCE [LARGE SCALE GENOMIC DNA]</scope>
    <source>
        <strain>DSM 273 / BCRC 81028 / 2530</strain>
    </source>
</reference>
<feature type="chain" id="PRO_1000048405" description="Light-independent protochlorophyllide reductase subunit B">
    <location>
        <begin position="1"/>
        <end position="525"/>
    </location>
</feature>
<feature type="region of interest" description="Disordered" evidence="2">
    <location>
        <begin position="447"/>
        <end position="470"/>
    </location>
</feature>
<feature type="compositionally biased region" description="Low complexity" evidence="2">
    <location>
        <begin position="460"/>
        <end position="470"/>
    </location>
</feature>
<feature type="active site" description="Proton donor" evidence="1">
    <location>
        <position position="292"/>
    </location>
</feature>
<feature type="binding site" evidence="1">
    <location>
        <position position="36"/>
    </location>
    <ligand>
        <name>[4Fe-4S] cluster</name>
        <dbReference type="ChEBI" id="CHEBI:49883"/>
        <note>ligand shared with heterodimeric partner</note>
    </ligand>
</feature>
<feature type="binding site" evidence="1">
    <location>
        <begin position="428"/>
        <end position="429"/>
    </location>
    <ligand>
        <name>substrate</name>
    </ligand>
</feature>
<protein>
    <recommendedName>
        <fullName evidence="1">Light-independent protochlorophyllide reductase subunit B</fullName>
        <shortName evidence="1">DPOR subunit B</shortName>
        <shortName evidence="1">LI-POR subunit B</shortName>
        <ecNumber evidence="1">1.3.7.7</ecNumber>
    </recommendedName>
</protein>
<accession>Q3B6C7</accession>
<organism>
    <name type="scientific">Chlorobium luteolum (strain DSM 273 / BCRC 81028 / 2530)</name>
    <name type="common">Pelodictyon luteolum</name>
    <dbReference type="NCBI Taxonomy" id="319225"/>
    <lineage>
        <taxon>Bacteria</taxon>
        <taxon>Pseudomonadati</taxon>
        <taxon>Chlorobiota</taxon>
        <taxon>Chlorobiia</taxon>
        <taxon>Chlorobiales</taxon>
        <taxon>Chlorobiaceae</taxon>
        <taxon>Chlorobium/Pelodictyon group</taxon>
        <taxon>Pelodictyon</taxon>
    </lineage>
</organism>
<evidence type="ECO:0000255" key="1">
    <source>
        <dbReference type="HAMAP-Rule" id="MF_00353"/>
    </source>
</evidence>
<evidence type="ECO:0000256" key="2">
    <source>
        <dbReference type="SAM" id="MobiDB-lite"/>
    </source>
</evidence>
<name>BCHB_CHLL3</name>
<gene>
    <name evidence="1" type="primary">bchB</name>
    <name type="ordered locus">Plut_0216</name>
</gene>
<comment type="function">
    <text evidence="1">Component of the dark-operative protochlorophyllide reductase (DPOR) that uses Mg-ATP and reduced ferredoxin to reduce ring D of protochlorophyllide (Pchlide) to form chlorophyllide a (Chlide). This reaction is light-independent. The NB-protein (BchN-BchB) is the catalytic component of the complex.</text>
</comment>
<comment type="catalytic activity">
    <reaction evidence="1">
        <text>chlorophyllide a + oxidized 2[4Fe-4S]-[ferredoxin] + 2 ADP + 2 phosphate = protochlorophyllide a + reduced 2[4Fe-4S]-[ferredoxin] + 2 ATP + 2 H2O</text>
        <dbReference type="Rhea" id="RHEA:28202"/>
        <dbReference type="Rhea" id="RHEA-COMP:10002"/>
        <dbReference type="Rhea" id="RHEA-COMP:10004"/>
        <dbReference type="ChEBI" id="CHEBI:15377"/>
        <dbReference type="ChEBI" id="CHEBI:30616"/>
        <dbReference type="ChEBI" id="CHEBI:33722"/>
        <dbReference type="ChEBI" id="CHEBI:33723"/>
        <dbReference type="ChEBI" id="CHEBI:43474"/>
        <dbReference type="ChEBI" id="CHEBI:83348"/>
        <dbReference type="ChEBI" id="CHEBI:83350"/>
        <dbReference type="ChEBI" id="CHEBI:456216"/>
        <dbReference type="EC" id="1.3.7.7"/>
    </reaction>
</comment>
<comment type="cofactor">
    <cofactor evidence="1">
        <name>[4Fe-4S] cluster</name>
        <dbReference type="ChEBI" id="CHEBI:49883"/>
    </cofactor>
    <text evidence="1">Binds 1 [4Fe-4S] cluster per heterodimer. The cluster is bound at the heterodimer interface by residues from both subunits.</text>
</comment>
<comment type="pathway">
    <text evidence="1">Porphyrin-containing compound metabolism; bacteriochlorophyll biosynthesis (light-independent).</text>
</comment>
<comment type="subunit">
    <text evidence="1">Protochlorophyllide reductase is composed of three subunits; BchL, BchN and BchB. Forms a heterotetramer of two BchB and two BchN subunits.</text>
</comment>
<comment type="similarity">
    <text evidence="1">Belongs to the ChlB/BchB/BchZ family.</text>
</comment>
<keyword id="KW-0004">4Fe-4S</keyword>
<keyword id="KW-0067">ATP-binding</keyword>
<keyword id="KW-0077">Bacteriochlorophyll biosynthesis</keyword>
<keyword id="KW-0149">Chlorophyll biosynthesis</keyword>
<keyword id="KW-0408">Iron</keyword>
<keyword id="KW-0411">Iron-sulfur</keyword>
<keyword id="KW-0479">Metal-binding</keyword>
<keyword id="KW-0547">Nucleotide-binding</keyword>
<keyword id="KW-0560">Oxidoreductase</keyword>
<keyword id="KW-0602">Photosynthesis</keyword>
<keyword id="KW-1185">Reference proteome</keyword>
<proteinExistence type="inferred from homology"/>
<dbReference type="EC" id="1.3.7.7" evidence="1"/>
<dbReference type="EMBL" id="CP000096">
    <property type="protein sequence ID" value="ABB23104.1"/>
    <property type="molecule type" value="Genomic_DNA"/>
</dbReference>
<dbReference type="RefSeq" id="WP_011356979.1">
    <property type="nucleotide sequence ID" value="NC_007512.1"/>
</dbReference>
<dbReference type="SMR" id="Q3B6C7"/>
<dbReference type="STRING" id="319225.Plut_0216"/>
<dbReference type="KEGG" id="plt:Plut_0216"/>
<dbReference type="eggNOG" id="COG2710">
    <property type="taxonomic scope" value="Bacteria"/>
</dbReference>
<dbReference type="HOGENOM" id="CLU_025470_0_0_10"/>
<dbReference type="OrthoDB" id="5717231at2"/>
<dbReference type="UniPathway" id="UPA00671"/>
<dbReference type="Proteomes" id="UP000002709">
    <property type="component" value="Chromosome"/>
</dbReference>
<dbReference type="GO" id="GO:0051539">
    <property type="term" value="F:4 iron, 4 sulfur cluster binding"/>
    <property type="evidence" value="ECO:0007669"/>
    <property type="project" value="UniProtKB-UniRule"/>
</dbReference>
<dbReference type="GO" id="GO:0005524">
    <property type="term" value="F:ATP binding"/>
    <property type="evidence" value="ECO:0007669"/>
    <property type="project" value="UniProtKB-UniRule"/>
</dbReference>
<dbReference type="GO" id="GO:0046872">
    <property type="term" value="F:metal ion binding"/>
    <property type="evidence" value="ECO:0007669"/>
    <property type="project" value="UniProtKB-KW"/>
</dbReference>
<dbReference type="GO" id="GO:0016730">
    <property type="term" value="F:oxidoreductase activity, acting on iron-sulfur proteins as donors"/>
    <property type="evidence" value="ECO:0007669"/>
    <property type="project" value="InterPro"/>
</dbReference>
<dbReference type="GO" id="GO:0016636">
    <property type="term" value="F:oxidoreductase activity, acting on the CH-CH group of donors, iron-sulfur protein as acceptor"/>
    <property type="evidence" value="ECO:0007669"/>
    <property type="project" value="UniProtKB-UniRule"/>
</dbReference>
<dbReference type="GO" id="GO:0036070">
    <property type="term" value="P:light-independent bacteriochlorophyll biosynthetic process"/>
    <property type="evidence" value="ECO:0007669"/>
    <property type="project" value="UniProtKB-UniRule"/>
</dbReference>
<dbReference type="GO" id="GO:0019685">
    <property type="term" value="P:photosynthesis, dark reaction"/>
    <property type="evidence" value="ECO:0007669"/>
    <property type="project" value="InterPro"/>
</dbReference>
<dbReference type="Gene3D" id="1.20.89.20">
    <property type="match status" value="1"/>
</dbReference>
<dbReference type="Gene3D" id="3.40.50.1980">
    <property type="entry name" value="Nitrogenase molybdenum iron protein domain"/>
    <property type="match status" value="3"/>
</dbReference>
<dbReference type="Gene3D" id="1.10.8.550">
    <property type="entry name" value="Proto-chlorophyllide reductase 57 kD subunit B"/>
    <property type="match status" value="1"/>
</dbReference>
<dbReference type="HAMAP" id="MF_00353">
    <property type="entry name" value="ChlB_BchB"/>
    <property type="match status" value="1"/>
</dbReference>
<dbReference type="InterPro" id="IPR050152">
    <property type="entry name" value="ChlB/BchB/BchZ"/>
</dbReference>
<dbReference type="InterPro" id="IPR013580">
    <property type="entry name" value="LI-POR_suB-like_C"/>
</dbReference>
<dbReference type="InterPro" id="IPR000510">
    <property type="entry name" value="Nase/OxRdtase_comp1"/>
</dbReference>
<dbReference type="InterPro" id="IPR042298">
    <property type="entry name" value="P-CP_red_C"/>
</dbReference>
<dbReference type="InterPro" id="IPR005969">
    <property type="entry name" value="Protochl_reductB"/>
</dbReference>
<dbReference type="InterPro" id="IPR016209">
    <property type="entry name" value="Protochlorophyllide_Rdtase"/>
</dbReference>
<dbReference type="NCBIfam" id="TIGR01278">
    <property type="entry name" value="DPOR_BchB"/>
    <property type="match status" value="1"/>
</dbReference>
<dbReference type="NCBIfam" id="NF002789">
    <property type="entry name" value="PRK02910.1-3"/>
    <property type="match status" value="1"/>
</dbReference>
<dbReference type="PANTHER" id="PTHR33712">
    <property type="entry name" value="LIGHT-INDEPENDENT PROTOCHLOROPHYLLIDE REDUCTASE SUBUNIT B"/>
    <property type="match status" value="1"/>
</dbReference>
<dbReference type="PANTHER" id="PTHR33712:SF7">
    <property type="entry name" value="LIGHT-INDEPENDENT PROTOCHLOROPHYLLIDE REDUCTASE SUBUNIT B"/>
    <property type="match status" value="1"/>
</dbReference>
<dbReference type="Pfam" id="PF00148">
    <property type="entry name" value="Oxidored_nitro"/>
    <property type="match status" value="1"/>
</dbReference>
<dbReference type="Pfam" id="PF08369">
    <property type="entry name" value="PCP_red"/>
    <property type="match status" value="1"/>
</dbReference>
<dbReference type="PIRSF" id="PIRSF000163">
    <property type="entry name" value="PCP_ChlB"/>
    <property type="match status" value="1"/>
</dbReference>
<dbReference type="SUPFAM" id="SSF53807">
    <property type="entry name" value="Helical backbone' metal receptor"/>
    <property type="match status" value="1"/>
</dbReference>
<sequence>MRLAFWLYEGTALHGISRVTNSMKGVHTVYHAPQGDDYITATYTMLERTPEFPALSISVVRGRDLAQGVSRLPATLQQVEEHYHPELSVIAPSCSTALLQEDLHQLAAQSGVPQDKLMVYAVNPFRVTENEAADGLLTALVKRYAAEGPKTAAPTVNLLGFTSLGFHLKANLTSIRRLLTTLGVKVNVVAPWGAGIADLKRLPEAWLTIAPFREIGQTAAAYLEETFGVPTEYGTPLGVEPTLRWLRAVIEKLNTVGAKEGATPIAMPELHAFSLDGMSAPSGVPWFARTADMESFSNKKAFVFGDATTTVAMVKFLRDELGMQIIGAGTYLERHADWVRKELDGYLPGALMVTERFQDVAQVIEDEMPDLVCGTQMERHSCRKLDVPCMVVCPPTHIENHLLGYYPFLGFDGADVIADRVYISCKLGLEKHLIDFFGDAGLEYEEPSASSENGSAPLSAGTATPAAAPEEGGMAWTDEAETMLKKVPFFVRKKVRKNTENFAEENGESRVSVEVFRRAKESLGG</sequence>